<name>NUOK_ECO8A</name>
<comment type="function">
    <text evidence="1">NDH-1 shuttles electrons from NADH, via FMN and iron-sulfur (Fe-S) centers, to quinones in the respiratory chain. The immediate electron acceptor for the enzyme in this species is believed to be ubiquinone. Couples the redox reaction to proton translocation (for every two electrons transferred, four hydrogen ions are translocated across the cytoplasmic membrane), and thus conserves the redox energy in a proton gradient.</text>
</comment>
<comment type="catalytic activity">
    <reaction evidence="1">
        <text>a quinone + NADH + 5 H(+)(in) = a quinol + NAD(+) + 4 H(+)(out)</text>
        <dbReference type="Rhea" id="RHEA:57888"/>
        <dbReference type="ChEBI" id="CHEBI:15378"/>
        <dbReference type="ChEBI" id="CHEBI:24646"/>
        <dbReference type="ChEBI" id="CHEBI:57540"/>
        <dbReference type="ChEBI" id="CHEBI:57945"/>
        <dbReference type="ChEBI" id="CHEBI:132124"/>
    </reaction>
</comment>
<comment type="subunit">
    <text evidence="1">NDH-1 is composed of 13 different subunits. Subunits NuoA, H, J, K, L, M, N constitute the membrane sector of the complex.</text>
</comment>
<comment type="subcellular location">
    <subcellularLocation>
        <location evidence="1">Cell inner membrane</location>
        <topology evidence="1">Multi-pass membrane protein</topology>
    </subcellularLocation>
</comment>
<comment type="similarity">
    <text evidence="1">Belongs to the complex I subunit 4L family.</text>
</comment>
<accession>B7M5V8</accession>
<proteinExistence type="inferred from homology"/>
<evidence type="ECO:0000255" key="1">
    <source>
        <dbReference type="HAMAP-Rule" id="MF_01456"/>
    </source>
</evidence>
<organism>
    <name type="scientific">Escherichia coli O8 (strain IAI1)</name>
    <dbReference type="NCBI Taxonomy" id="585034"/>
    <lineage>
        <taxon>Bacteria</taxon>
        <taxon>Pseudomonadati</taxon>
        <taxon>Pseudomonadota</taxon>
        <taxon>Gammaproteobacteria</taxon>
        <taxon>Enterobacterales</taxon>
        <taxon>Enterobacteriaceae</taxon>
        <taxon>Escherichia</taxon>
    </lineage>
</organism>
<dbReference type="EC" id="7.1.1.-" evidence="1"/>
<dbReference type="EMBL" id="CU928160">
    <property type="protein sequence ID" value="CAQ99195.1"/>
    <property type="molecule type" value="Genomic_DNA"/>
</dbReference>
<dbReference type="RefSeq" id="WP_000612644.1">
    <property type="nucleotide sequence ID" value="NC_011741.1"/>
</dbReference>
<dbReference type="SMR" id="B7M5V8"/>
<dbReference type="GeneID" id="93033872"/>
<dbReference type="KEGG" id="ecr:ECIAI1_2353"/>
<dbReference type="HOGENOM" id="CLU_144724_0_1_6"/>
<dbReference type="GO" id="GO:0030964">
    <property type="term" value="C:NADH dehydrogenase complex"/>
    <property type="evidence" value="ECO:0007669"/>
    <property type="project" value="TreeGrafter"/>
</dbReference>
<dbReference type="GO" id="GO:0005886">
    <property type="term" value="C:plasma membrane"/>
    <property type="evidence" value="ECO:0007669"/>
    <property type="project" value="UniProtKB-SubCell"/>
</dbReference>
<dbReference type="GO" id="GO:0050136">
    <property type="term" value="F:NADH:ubiquinone reductase (non-electrogenic) activity"/>
    <property type="evidence" value="ECO:0007669"/>
    <property type="project" value="UniProtKB-UniRule"/>
</dbReference>
<dbReference type="GO" id="GO:0048038">
    <property type="term" value="F:quinone binding"/>
    <property type="evidence" value="ECO:0007669"/>
    <property type="project" value="UniProtKB-KW"/>
</dbReference>
<dbReference type="GO" id="GO:0042773">
    <property type="term" value="P:ATP synthesis coupled electron transport"/>
    <property type="evidence" value="ECO:0007669"/>
    <property type="project" value="InterPro"/>
</dbReference>
<dbReference type="FunFam" id="1.10.287.3510:FF:000001">
    <property type="entry name" value="NADH-quinone oxidoreductase subunit K"/>
    <property type="match status" value="1"/>
</dbReference>
<dbReference type="Gene3D" id="1.10.287.3510">
    <property type="match status" value="1"/>
</dbReference>
<dbReference type="HAMAP" id="MF_01456">
    <property type="entry name" value="NDH1_NuoK"/>
    <property type="match status" value="1"/>
</dbReference>
<dbReference type="InterPro" id="IPR001133">
    <property type="entry name" value="NADH_UbQ_OxRdtase_chain4L/K"/>
</dbReference>
<dbReference type="InterPro" id="IPR039428">
    <property type="entry name" value="NUOK/Mnh_C1-like"/>
</dbReference>
<dbReference type="NCBIfam" id="NF004319">
    <property type="entry name" value="PRK05715.1-1"/>
    <property type="match status" value="1"/>
</dbReference>
<dbReference type="NCBIfam" id="NF004320">
    <property type="entry name" value="PRK05715.1-2"/>
    <property type="match status" value="1"/>
</dbReference>
<dbReference type="PANTHER" id="PTHR11434:SF16">
    <property type="entry name" value="NADH-UBIQUINONE OXIDOREDUCTASE CHAIN 4L"/>
    <property type="match status" value="1"/>
</dbReference>
<dbReference type="PANTHER" id="PTHR11434">
    <property type="entry name" value="NADH-UBIQUINONE OXIDOREDUCTASE SUBUNIT ND4L"/>
    <property type="match status" value="1"/>
</dbReference>
<dbReference type="Pfam" id="PF00420">
    <property type="entry name" value="Oxidored_q2"/>
    <property type="match status" value="1"/>
</dbReference>
<sequence>MIPLQHGLILAAILFVLGLTGLVIRRNLLFMLIGLEIMINASALAFVVAGSYWGQTDGQVMYILAISLAAAEASIGLALLLQLHRRRQNLNIDSVSEMRG</sequence>
<feature type="chain" id="PRO_0000390057" description="NADH-quinone oxidoreductase subunit K">
    <location>
        <begin position="1"/>
        <end position="100"/>
    </location>
</feature>
<feature type="transmembrane region" description="Helical" evidence="1">
    <location>
        <begin position="4"/>
        <end position="24"/>
    </location>
</feature>
<feature type="transmembrane region" description="Helical" evidence="1">
    <location>
        <begin position="28"/>
        <end position="48"/>
    </location>
</feature>
<feature type="transmembrane region" description="Helical" evidence="1">
    <location>
        <begin position="60"/>
        <end position="80"/>
    </location>
</feature>
<gene>
    <name evidence="1" type="primary">nuoK</name>
    <name type="ordered locus">ECIAI1_2353</name>
</gene>
<protein>
    <recommendedName>
        <fullName evidence="1">NADH-quinone oxidoreductase subunit K</fullName>
        <ecNumber evidence="1">7.1.1.-</ecNumber>
    </recommendedName>
    <alternativeName>
        <fullName evidence="1">NADH dehydrogenase I subunit K</fullName>
    </alternativeName>
    <alternativeName>
        <fullName evidence="1">NDH-1 subunit K</fullName>
    </alternativeName>
</protein>
<keyword id="KW-0997">Cell inner membrane</keyword>
<keyword id="KW-1003">Cell membrane</keyword>
<keyword id="KW-0472">Membrane</keyword>
<keyword id="KW-0520">NAD</keyword>
<keyword id="KW-0874">Quinone</keyword>
<keyword id="KW-1278">Translocase</keyword>
<keyword id="KW-0812">Transmembrane</keyword>
<keyword id="KW-1133">Transmembrane helix</keyword>
<keyword id="KW-0813">Transport</keyword>
<keyword id="KW-0830">Ubiquinone</keyword>
<reference key="1">
    <citation type="journal article" date="2009" name="PLoS Genet.">
        <title>Organised genome dynamics in the Escherichia coli species results in highly diverse adaptive paths.</title>
        <authorList>
            <person name="Touchon M."/>
            <person name="Hoede C."/>
            <person name="Tenaillon O."/>
            <person name="Barbe V."/>
            <person name="Baeriswyl S."/>
            <person name="Bidet P."/>
            <person name="Bingen E."/>
            <person name="Bonacorsi S."/>
            <person name="Bouchier C."/>
            <person name="Bouvet O."/>
            <person name="Calteau A."/>
            <person name="Chiapello H."/>
            <person name="Clermont O."/>
            <person name="Cruveiller S."/>
            <person name="Danchin A."/>
            <person name="Diard M."/>
            <person name="Dossat C."/>
            <person name="Karoui M.E."/>
            <person name="Frapy E."/>
            <person name="Garry L."/>
            <person name="Ghigo J.M."/>
            <person name="Gilles A.M."/>
            <person name="Johnson J."/>
            <person name="Le Bouguenec C."/>
            <person name="Lescat M."/>
            <person name="Mangenot S."/>
            <person name="Martinez-Jehanne V."/>
            <person name="Matic I."/>
            <person name="Nassif X."/>
            <person name="Oztas S."/>
            <person name="Petit M.A."/>
            <person name="Pichon C."/>
            <person name="Rouy Z."/>
            <person name="Ruf C.S."/>
            <person name="Schneider D."/>
            <person name="Tourret J."/>
            <person name="Vacherie B."/>
            <person name="Vallenet D."/>
            <person name="Medigue C."/>
            <person name="Rocha E.P.C."/>
            <person name="Denamur E."/>
        </authorList>
    </citation>
    <scope>NUCLEOTIDE SEQUENCE [LARGE SCALE GENOMIC DNA]</scope>
    <source>
        <strain>IAI1</strain>
    </source>
</reference>